<organism>
    <name type="scientific">Mus musculus</name>
    <name type="common">Mouse</name>
    <dbReference type="NCBI Taxonomy" id="10090"/>
    <lineage>
        <taxon>Eukaryota</taxon>
        <taxon>Metazoa</taxon>
        <taxon>Chordata</taxon>
        <taxon>Craniata</taxon>
        <taxon>Vertebrata</taxon>
        <taxon>Euteleostomi</taxon>
        <taxon>Mammalia</taxon>
        <taxon>Eutheria</taxon>
        <taxon>Euarchontoglires</taxon>
        <taxon>Glires</taxon>
        <taxon>Rodentia</taxon>
        <taxon>Myomorpha</taxon>
        <taxon>Muroidea</taxon>
        <taxon>Muridae</taxon>
        <taxon>Murinae</taxon>
        <taxon>Mus</taxon>
        <taxon>Mus</taxon>
    </lineage>
</organism>
<sequence>MGDPGLAKLQFAPFNSALDVGFWHELTQKKLNEYRLDEAPKDIKGYYYNGDSAGLPTRLTLEFSAFDMSASTPAHCCPAMGTLHNTNTLEAFKTADKKLLLEQSANEIWEAIKSGAALENPMLLNKFLLLTFADLKKYHFYYWFCCPALCLPESIPLIRGPVSLDQRLSPKQIQALEHAYDDLCRAEGVTALPYFLFKYDDDTVLVSLLKHYSDFFQGQRTKITVGVYDPCNLAQYPGWPLRNFLVLAAHRWSGSFQSVEVLCFRDRTMQGARDVTHSIIFEVKLPEMAFSPDCPKAVGWEKNQKGGMGPRMVNLSGCMDPKRLAESSVDLNLKLMCWRLVPTLDLDKVVSVKCLLLGAGTLGCNVARTLMGWGVRHVTFVDNAKISYSNPVRQPLYEFEDCLGGGKPKALAAAERLQKIFPGVNARGFNMSIPMPGHPVNFSDVTMEQARRDVEQLEQLIDNHDVIFLLMDTRESRWLPTVIAASKRKLVINAALGFDTFVVMRHGLKKPKQQGAGDLCPSHLVAPADLGSSLFANIPGYKLGCYFCNDVVAPGDSTRDRTLDQQCTVSRPGLAVIAGALAVELMVSVLQHPEGGYAIASSSDDRMNEPPTSLGLVPHQIRGFLSRFDNVLPVSLAFDKCTACSPKVLDQYEREGFTFLAKVFNSSHSFLEDLTGLTLLHQETQAAEIWDMSDEETV</sequence>
<evidence type="ECO:0000250" key="1"/>
<evidence type="ECO:0000250" key="2">
    <source>
        <dbReference type="UniProtKB" id="O95352"/>
    </source>
</evidence>
<evidence type="ECO:0000269" key="3">
    <source>
    </source>
</evidence>
<evidence type="ECO:0000269" key="4">
    <source>
    </source>
</evidence>
<evidence type="ECO:0000269" key="5">
    <source>
    </source>
</evidence>
<evidence type="ECO:0000269" key="6">
    <source>
    </source>
</evidence>
<evidence type="ECO:0000269" key="7">
    <source>
    </source>
</evidence>
<evidence type="ECO:0000269" key="8">
    <source>
    </source>
</evidence>
<evidence type="ECO:0000269" key="9">
    <source>
    </source>
</evidence>
<evidence type="ECO:0000269" key="10">
    <source>
    </source>
</evidence>
<evidence type="ECO:0000269" key="11">
    <source>
    </source>
</evidence>
<evidence type="ECO:0000269" key="12">
    <source>
    </source>
</evidence>
<evidence type="ECO:0000269" key="13">
    <source>
    </source>
</evidence>
<evidence type="ECO:0000269" key="14">
    <source>
    </source>
</evidence>
<evidence type="ECO:0000269" key="15">
    <source>
    </source>
</evidence>
<evidence type="ECO:0000269" key="16">
    <source>
    </source>
</evidence>
<evidence type="ECO:0000269" key="17">
    <source>
    </source>
</evidence>
<evidence type="ECO:0000269" key="18">
    <source>
    </source>
</evidence>
<evidence type="ECO:0000305" key="19"/>
<evidence type="ECO:0000312" key="20">
    <source>
        <dbReference type="MGI" id="MGI:1921494"/>
    </source>
</evidence>
<keyword id="KW-0007">Acetylation</keyword>
<keyword id="KW-0072">Autophagy</keyword>
<keyword id="KW-0090">Biological rhythms</keyword>
<keyword id="KW-0963">Cytoplasm</keyword>
<keyword id="KW-1017">Isopeptide bond</keyword>
<keyword id="KW-0597">Phosphoprotein</keyword>
<keyword id="KW-0653">Protein transport</keyword>
<keyword id="KW-1185">Reference proteome</keyword>
<keyword id="KW-0813">Transport</keyword>
<keyword id="KW-0832">Ubl conjugation</keyword>
<keyword id="KW-0833">Ubl conjugation pathway</keyword>
<name>ATG7_MOUSE</name>
<accession>Q9D906</accession>
<accession>Q3TCD9</accession>
<accession>Q8K4Q5</accession>
<gene>
    <name evidence="20" type="primary">Atg7</name>
    <name type="synonym">Apg7l</name>
</gene>
<protein>
    <recommendedName>
        <fullName evidence="19">Ubiquitin-like modifier-activating enzyme ATG7</fullName>
    </recommendedName>
    <alternativeName>
        <fullName>ATG12-activating enzyme E1 ATG7</fullName>
    </alternativeName>
    <alternativeName>
        <fullName>Autophagy-related protein 7</fullName>
        <shortName>APG7-like</shortName>
        <shortName>mAGP7</shortName>
    </alternativeName>
    <alternativeName>
        <fullName>Ubiquitin-activating enzyme E1-like protein</fullName>
    </alternativeName>
</protein>
<proteinExistence type="evidence at protein level"/>
<feature type="chain" id="PRO_0000212807" description="Ubiquitin-like modifier-activating enzyme ATG7">
    <location>
        <begin position="1"/>
        <end position="698"/>
    </location>
</feature>
<feature type="short sequence motif" description="FAP motif">
    <location>
        <begin position="11"/>
        <end position="13"/>
    </location>
</feature>
<feature type="active site" description="Glycyl thioester intermediate" evidence="19">
    <location>
        <position position="567"/>
    </location>
</feature>
<feature type="modified residue" description="Phosphoserine" evidence="2">
    <location>
        <position position="693"/>
    </location>
</feature>
<feature type="cross-link" description="Glycyl lysine isopeptide (Lys-Gly) (interchain with G-Cter in ubiquitin)" evidence="2">
    <location>
        <position position="41"/>
    </location>
</feature>
<feature type="mutagenesis site" description="Instead of the formation of an intermediate complex with a thiol ester bond between ATG7 (E1-like enzyme) and GABARAPL1 (MAP1LC3, GABARAP or GABARAPL; substrates), a stable complex with an O-ester bond is formed." evidence="3">
    <original>C</original>
    <variation>S</variation>
    <location>
        <position position="567"/>
    </location>
</feature>
<feature type="sequence conflict" description="In Ref. 1; BAC10416." evidence="19" ref="1">
    <original>F</original>
    <variation>L</variation>
    <location>
        <position position="22"/>
    </location>
</feature>
<dbReference type="EMBL" id="AB079385">
    <property type="protein sequence ID" value="BAC10416.1"/>
    <property type="molecule type" value="mRNA"/>
</dbReference>
<dbReference type="EMBL" id="AK007484">
    <property type="protein sequence ID" value="BAB25060.1"/>
    <property type="molecule type" value="mRNA"/>
</dbReference>
<dbReference type="EMBL" id="AK035604">
    <property type="protein sequence ID" value="BAC29122.1"/>
    <property type="molecule type" value="mRNA"/>
</dbReference>
<dbReference type="EMBL" id="AK161133">
    <property type="protein sequence ID" value="BAE36208.1"/>
    <property type="molecule type" value="mRNA"/>
</dbReference>
<dbReference type="EMBL" id="AK170769">
    <property type="protein sequence ID" value="BAE42018.1"/>
    <property type="molecule type" value="mRNA"/>
</dbReference>
<dbReference type="EMBL" id="AK172272">
    <property type="protein sequence ID" value="BAE42917.1"/>
    <property type="molecule type" value="mRNA"/>
</dbReference>
<dbReference type="EMBL" id="BC058597">
    <property type="protein sequence ID" value="AAH58597.1"/>
    <property type="molecule type" value="mRNA"/>
</dbReference>
<dbReference type="CCDS" id="CCDS39598.1"/>
<dbReference type="RefSeq" id="NP_001240646.1">
    <property type="nucleotide sequence ID" value="NM_001253717.1"/>
</dbReference>
<dbReference type="RefSeq" id="NP_001240647.1">
    <property type="nucleotide sequence ID" value="NM_001253718.2"/>
</dbReference>
<dbReference type="RefSeq" id="NP_083111.1">
    <property type="nucleotide sequence ID" value="NM_028835.5"/>
</dbReference>
<dbReference type="RefSeq" id="XP_006506772.1">
    <property type="nucleotide sequence ID" value="XM_006506709.2"/>
</dbReference>
<dbReference type="RefSeq" id="XP_006506773.1">
    <property type="nucleotide sequence ID" value="XM_006506710.3"/>
</dbReference>
<dbReference type="RefSeq" id="XP_011239796.1">
    <property type="nucleotide sequence ID" value="XM_011241494.2"/>
</dbReference>
<dbReference type="RefSeq" id="XP_011239797.1">
    <property type="nucleotide sequence ID" value="XM_011241495.2"/>
</dbReference>
<dbReference type="RefSeq" id="XP_036008260.1">
    <property type="nucleotide sequence ID" value="XM_036152367.1"/>
</dbReference>
<dbReference type="RefSeq" id="XP_036008261.1">
    <property type="nucleotide sequence ID" value="XM_036152368.1"/>
</dbReference>
<dbReference type="RefSeq" id="XP_036008262.1">
    <property type="nucleotide sequence ID" value="XM_036152369.1"/>
</dbReference>
<dbReference type="RefSeq" id="XP_036008263.1">
    <property type="nucleotide sequence ID" value="XM_036152370.1"/>
</dbReference>
<dbReference type="SMR" id="Q9D906"/>
<dbReference type="BioGRID" id="216602">
    <property type="interactions" value="36"/>
</dbReference>
<dbReference type="FunCoup" id="Q9D906">
    <property type="interactions" value="2077"/>
</dbReference>
<dbReference type="IntAct" id="Q9D906">
    <property type="interactions" value="2"/>
</dbReference>
<dbReference type="MINT" id="Q9D906"/>
<dbReference type="STRING" id="10090.ENSMUSP00000133215"/>
<dbReference type="GlyConnect" id="2807">
    <property type="glycosylation" value="2 N-Linked glycans (1 site)"/>
</dbReference>
<dbReference type="GlyCosmos" id="Q9D906">
    <property type="glycosylation" value="1 site, 2 glycans"/>
</dbReference>
<dbReference type="GlyGen" id="Q9D906">
    <property type="glycosylation" value="3 sites, 4 N-linked glycans (3 sites)"/>
</dbReference>
<dbReference type="iPTMnet" id="Q9D906"/>
<dbReference type="PhosphoSitePlus" id="Q9D906"/>
<dbReference type="SwissPalm" id="Q9D906"/>
<dbReference type="jPOST" id="Q9D906"/>
<dbReference type="PaxDb" id="10090-ENSMUSP00000032457"/>
<dbReference type="ProteomicsDB" id="277127"/>
<dbReference type="Pumba" id="Q9D906"/>
<dbReference type="Antibodypedia" id="1972">
    <property type="antibodies" value="818 antibodies from 46 providers"/>
</dbReference>
<dbReference type="DNASU" id="74244"/>
<dbReference type="Ensembl" id="ENSMUST00000032457.17">
    <property type="protein sequence ID" value="ENSMUSP00000032457.10"/>
    <property type="gene ID" value="ENSMUSG00000030314.17"/>
</dbReference>
<dbReference type="Ensembl" id="ENSMUST00000182793.8">
    <property type="protein sequence ID" value="ENSMUSP00000138137.2"/>
    <property type="gene ID" value="ENSMUSG00000030314.17"/>
</dbReference>
<dbReference type="Ensembl" id="ENSMUST00000182902.8">
    <property type="protein sequence ID" value="ENSMUSP00000138651.2"/>
    <property type="gene ID" value="ENSMUSG00000030314.17"/>
</dbReference>
<dbReference type="GeneID" id="74244"/>
<dbReference type="KEGG" id="mmu:74244"/>
<dbReference type="UCSC" id="uc009dhz.2">
    <property type="organism name" value="mouse"/>
</dbReference>
<dbReference type="AGR" id="MGI:1921494"/>
<dbReference type="CTD" id="10533"/>
<dbReference type="MGI" id="MGI:1921494">
    <property type="gene designation" value="Atg7"/>
</dbReference>
<dbReference type="VEuPathDB" id="HostDB:ENSMUSG00000030314"/>
<dbReference type="eggNOG" id="KOG2337">
    <property type="taxonomic scope" value="Eukaryota"/>
</dbReference>
<dbReference type="GeneTree" id="ENSGT00390000017509"/>
<dbReference type="InParanoid" id="Q9D906"/>
<dbReference type="OMA" id="RQIWDAI"/>
<dbReference type="OrthoDB" id="338614at2759"/>
<dbReference type="PhylomeDB" id="Q9D906"/>
<dbReference type="TreeFam" id="TF105689"/>
<dbReference type="Reactome" id="R-MMU-1632852">
    <property type="pathway name" value="Macroautophagy"/>
</dbReference>
<dbReference type="Reactome" id="R-MMU-6798695">
    <property type="pathway name" value="Neutrophil degranulation"/>
</dbReference>
<dbReference type="Reactome" id="R-MMU-983168">
    <property type="pathway name" value="Antigen processing: Ubiquitination &amp; Proteasome degradation"/>
</dbReference>
<dbReference type="BioGRID-ORCS" id="74244">
    <property type="hits" value="23 hits in 80 CRISPR screens"/>
</dbReference>
<dbReference type="ChiTaRS" id="Atg7">
    <property type="organism name" value="mouse"/>
</dbReference>
<dbReference type="PRO" id="PR:Q9D906"/>
<dbReference type="Proteomes" id="UP000000589">
    <property type="component" value="Chromosome 6"/>
</dbReference>
<dbReference type="RNAct" id="Q9D906">
    <property type="molecule type" value="protein"/>
</dbReference>
<dbReference type="Bgee" id="ENSMUSG00000030314">
    <property type="expression patterns" value="Expressed in lumbar dorsal root ganglion and 253 other cell types or tissues"/>
</dbReference>
<dbReference type="ExpressionAtlas" id="Q9D906">
    <property type="expression patterns" value="baseline and differential"/>
</dbReference>
<dbReference type="GO" id="GO:0005930">
    <property type="term" value="C:axoneme"/>
    <property type="evidence" value="ECO:0000314"/>
    <property type="project" value="UniProtKB"/>
</dbReference>
<dbReference type="GO" id="GO:0005737">
    <property type="term" value="C:cytoplasm"/>
    <property type="evidence" value="ECO:0000250"/>
    <property type="project" value="UniProtKB"/>
</dbReference>
<dbReference type="GO" id="GO:0005829">
    <property type="term" value="C:cytosol"/>
    <property type="evidence" value="ECO:0000304"/>
    <property type="project" value="Reactome"/>
</dbReference>
<dbReference type="GO" id="GO:0098691">
    <property type="term" value="C:dopaminergic synapse"/>
    <property type="evidence" value="ECO:0000314"/>
    <property type="project" value="SynGO"/>
</dbReference>
<dbReference type="GO" id="GO:0016020">
    <property type="term" value="C:membrane"/>
    <property type="evidence" value="ECO:0007669"/>
    <property type="project" value="GOC"/>
</dbReference>
<dbReference type="GO" id="GO:0048471">
    <property type="term" value="C:perinuclear region of cytoplasm"/>
    <property type="evidence" value="ECO:0000314"/>
    <property type="project" value="MGI"/>
</dbReference>
<dbReference type="GO" id="GO:0000407">
    <property type="term" value="C:phagophore assembly site"/>
    <property type="evidence" value="ECO:0007669"/>
    <property type="project" value="UniProtKB-SubCell"/>
</dbReference>
<dbReference type="GO" id="GO:0098793">
    <property type="term" value="C:presynapse"/>
    <property type="evidence" value="ECO:0007669"/>
    <property type="project" value="GOC"/>
</dbReference>
<dbReference type="GO" id="GO:0019778">
    <property type="term" value="F:Atg12 activating enzyme activity"/>
    <property type="evidence" value="ECO:0000314"/>
    <property type="project" value="MGI"/>
</dbReference>
<dbReference type="GO" id="GO:0019779">
    <property type="term" value="F:Atg8 activating enzyme activity"/>
    <property type="evidence" value="ECO:0000314"/>
    <property type="project" value="MGI"/>
</dbReference>
<dbReference type="GO" id="GO:0007628">
    <property type="term" value="P:adult walking behavior"/>
    <property type="evidence" value="ECO:0000315"/>
    <property type="project" value="MGI"/>
</dbReference>
<dbReference type="GO" id="GO:0006915">
    <property type="term" value="P:apoptotic process"/>
    <property type="evidence" value="ECO:0000315"/>
    <property type="project" value="MGI"/>
</dbReference>
<dbReference type="GO" id="GO:0000045">
    <property type="term" value="P:autophagosome assembly"/>
    <property type="evidence" value="ECO:0000315"/>
    <property type="project" value="ParkinsonsUK-UCL"/>
</dbReference>
<dbReference type="GO" id="GO:0006914">
    <property type="term" value="P:autophagy"/>
    <property type="evidence" value="ECO:0000315"/>
    <property type="project" value="UniProtKB"/>
</dbReference>
<dbReference type="GO" id="GO:0000422">
    <property type="term" value="P:autophagy of mitochondrion"/>
    <property type="evidence" value="ECO:0000315"/>
    <property type="project" value="MGI"/>
</dbReference>
<dbReference type="GO" id="GO:0010659">
    <property type="term" value="P:cardiac muscle cell apoptotic process"/>
    <property type="evidence" value="ECO:0000315"/>
    <property type="project" value="MGI"/>
</dbReference>
<dbReference type="GO" id="GO:0055013">
    <property type="term" value="P:cardiac muscle cell development"/>
    <property type="evidence" value="ECO:0000315"/>
    <property type="project" value="MGI"/>
</dbReference>
<dbReference type="GO" id="GO:0071455">
    <property type="term" value="P:cellular response to hyperoxia"/>
    <property type="evidence" value="ECO:0000250"/>
    <property type="project" value="UniProtKB"/>
</dbReference>
<dbReference type="GO" id="GO:0034614">
    <property type="term" value="P:cellular response to reactive oxygen species"/>
    <property type="evidence" value="ECO:0000315"/>
    <property type="project" value="MGI"/>
</dbReference>
<dbReference type="GO" id="GO:0009267">
    <property type="term" value="P:cellular response to starvation"/>
    <property type="evidence" value="ECO:0000315"/>
    <property type="project" value="MGI"/>
</dbReference>
<dbReference type="GO" id="GO:0021955">
    <property type="term" value="P:central nervous system neuron axonogenesis"/>
    <property type="evidence" value="ECO:0000315"/>
    <property type="project" value="MGI"/>
</dbReference>
<dbReference type="GO" id="GO:0021680">
    <property type="term" value="P:cerebellar Purkinje cell layer development"/>
    <property type="evidence" value="ECO:0000315"/>
    <property type="project" value="MGI"/>
</dbReference>
<dbReference type="GO" id="GO:0021987">
    <property type="term" value="P:cerebral cortex development"/>
    <property type="evidence" value="ECO:0000315"/>
    <property type="project" value="MGI"/>
</dbReference>
<dbReference type="GO" id="GO:0006325">
    <property type="term" value="P:chromatin organization"/>
    <property type="evidence" value="ECO:0000315"/>
    <property type="project" value="MGI"/>
</dbReference>
<dbReference type="GO" id="GO:0051607">
    <property type="term" value="P:defense response to virus"/>
    <property type="evidence" value="ECO:0000315"/>
    <property type="project" value="MGI"/>
</dbReference>
<dbReference type="GO" id="GO:0051649">
    <property type="term" value="P:establishment of localization in cell"/>
    <property type="evidence" value="ECO:0000315"/>
    <property type="project" value="MGI"/>
</dbReference>
<dbReference type="GO" id="GO:0045087">
    <property type="term" value="P:innate immune response"/>
    <property type="evidence" value="ECO:0000315"/>
    <property type="project" value="MGI"/>
</dbReference>
<dbReference type="GO" id="GO:0035773">
    <property type="term" value="P:insulin secretion involved in cellular response to glucose stimulus"/>
    <property type="evidence" value="ECO:0000315"/>
    <property type="project" value="MGI"/>
</dbReference>
<dbReference type="GO" id="GO:0080144">
    <property type="term" value="P:intracellular amino acid homeostasis"/>
    <property type="evidence" value="ECO:0000315"/>
    <property type="project" value="MGI"/>
</dbReference>
<dbReference type="GO" id="GO:0090156">
    <property type="term" value="P:intracellular sphingolipid homeostasis"/>
    <property type="evidence" value="ECO:0000315"/>
    <property type="project" value="MGI"/>
</dbReference>
<dbReference type="GO" id="GO:0001889">
    <property type="term" value="P:liver development"/>
    <property type="evidence" value="ECO:0000315"/>
    <property type="project" value="MGI"/>
</dbReference>
<dbReference type="GO" id="GO:0016236">
    <property type="term" value="P:macroautophagy"/>
    <property type="evidence" value="ECO:0000315"/>
    <property type="project" value="MGI"/>
</dbReference>
<dbReference type="GO" id="GO:0061024">
    <property type="term" value="P:membrane organization"/>
    <property type="evidence" value="ECO:0000315"/>
    <property type="project" value="MGI"/>
</dbReference>
<dbReference type="GO" id="GO:0007005">
    <property type="term" value="P:mitochondrion organization"/>
    <property type="evidence" value="ECO:0000315"/>
    <property type="project" value="MGI"/>
</dbReference>
<dbReference type="GO" id="GO:0000423">
    <property type="term" value="P:mitophagy"/>
    <property type="evidence" value="ECO:0000315"/>
    <property type="project" value="ParkinsonsUK-UCL"/>
</dbReference>
<dbReference type="GO" id="GO:0070254">
    <property type="term" value="P:mucus secretion"/>
    <property type="evidence" value="ECO:0000315"/>
    <property type="project" value="MGI"/>
</dbReference>
<dbReference type="GO" id="GO:0043066">
    <property type="term" value="P:negative regulation of apoptotic process"/>
    <property type="evidence" value="ECO:0000315"/>
    <property type="project" value="ParkinsonsUK-UCL"/>
</dbReference>
<dbReference type="GO" id="GO:0010667">
    <property type="term" value="P:negative regulation of cardiac muscle cell apoptotic process"/>
    <property type="evidence" value="ECO:0000315"/>
    <property type="project" value="MGI"/>
</dbReference>
<dbReference type="GO" id="GO:0050765">
    <property type="term" value="P:negative regulation of phagocytosis"/>
    <property type="evidence" value="ECO:0000315"/>
    <property type="project" value="MGI"/>
</dbReference>
<dbReference type="GO" id="GO:0090155">
    <property type="term" value="P:negative regulation of sphingolipid biosynthetic process"/>
    <property type="evidence" value="ECO:0000315"/>
    <property type="project" value="MGI"/>
</dbReference>
<dbReference type="GO" id="GO:2000675">
    <property type="term" value="P:negative regulation of type B pancreatic cell apoptotic process"/>
    <property type="evidence" value="ECO:0000315"/>
    <property type="project" value="MGI"/>
</dbReference>
<dbReference type="GO" id="GO:0039689">
    <property type="term" value="P:negative stranded viral RNA replication"/>
    <property type="evidence" value="ECO:0000315"/>
    <property type="project" value="MGI"/>
</dbReference>
<dbReference type="GO" id="GO:0050877">
    <property type="term" value="P:nervous system process"/>
    <property type="evidence" value="ECO:0000315"/>
    <property type="project" value="MGI"/>
</dbReference>
<dbReference type="GO" id="GO:0031175">
    <property type="term" value="P:neuron projection development"/>
    <property type="evidence" value="ECO:0000315"/>
    <property type="project" value="MGI"/>
</dbReference>
<dbReference type="GO" id="GO:0043065">
    <property type="term" value="P:positive regulation of apoptotic process"/>
    <property type="evidence" value="ECO:0000250"/>
    <property type="project" value="UniProtKB"/>
</dbReference>
<dbReference type="GO" id="GO:0035774">
    <property type="term" value="P:positive regulation of insulin secretion involved in cellular response to glucose stimulus"/>
    <property type="evidence" value="ECO:0000315"/>
    <property type="project" value="MGI"/>
</dbReference>
<dbReference type="GO" id="GO:0070257">
    <property type="term" value="P:positive regulation of mucus secretion"/>
    <property type="evidence" value="ECO:0000315"/>
    <property type="project" value="MGI"/>
</dbReference>
<dbReference type="GO" id="GO:0032436">
    <property type="term" value="P:positive regulation of proteasomal ubiquitin-dependent protein catabolic process"/>
    <property type="evidence" value="ECO:0000315"/>
    <property type="project" value="MGI"/>
</dbReference>
<dbReference type="GO" id="GO:0045732">
    <property type="term" value="P:positive regulation of protein catabolic process"/>
    <property type="evidence" value="ECO:0000250"/>
    <property type="project" value="UniProtKB"/>
</dbReference>
<dbReference type="GO" id="GO:0009791">
    <property type="term" value="P:post-embryonic development"/>
    <property type="evidence" value="ECO:0000315"/>
    <property type="project" value="MGI"/>
</dbReference>
<dbReference type="GO" id="GO:0030163">
    <property type="term" value="P:protein catabolic process"/>
    <property type="evidence" value="ECO:0000315"/>
    <property type="project" value="MGI"/>
</dbReference>
<dbReference type="GO" id="GO:0032446">
    <property type="term" value="P:protein modification by small protein conjugation"/>
    <property type="evidence" value="ECO:0000315"/>
    <property type="project" value="MGI"/>
</dbReference>
<dbReference type="GO" id="GO:0021860">
    <property type="term" value="P:pyramidal neuron development"/>
    <property type="evidence" value="ECO:0000315"/>
    <property type="project" value="MGI"/>
</dbReference>
<dbReference type="GO" id="GO:0060284">
    <property type="term" value="P:regulation of cell development"/>
    <property type="evidence" value="ECO:0000315"/>
    <property type="project" value="ParkinsonsUK-UCL"/>
</dbReference>
<dbReference type="GO" id="GO:0042752">
    <property type="term" value="P:regulation of circadian rhythm"/>
    <property type="evidence" value="ECO:0000315"/>
    <property type="project" value="UniProtKB"/>
</dbReference>
<dbReference type="GO" id="GO:1903706">
    <property type="term" value="P:regulation of hemopoiesis"/>
    <property type="evidence" value="ECO:0000315"/>
    <property type="project" value="ParkinsonsUK-UCL"/>
</dbReference>
<dbReference type="GO" id="GO:0031396">
    <property type="term" value="P:regulation of protein ubiquitination"/>
    <property type="evidence" value="ECO:0000315"/>
    <property type="project" value="MGI"/>
</dbReference>
<dbReference type="GO" id="GO:0042594">
    <property type="term" value="P:response to starvation"/>
    <property type="evidence" value="ECO:0000315"/>
    <property type="project" value="MGI"/>
</dbReference>
<dbReference type="GO" id="GO:0048511">
    <property type="term" value="P:rhythmic process"/>
    <property type="evidence" value="ECO:0007669"/>
    <property type="project" value="UniProtKB-KW"/>
</dbReference>
<dbReference type="GO" id="GO:0030148">
    <property type="term" value="P:sphingolipid biosynthetic process"/>
    <property type="evidence" value="ECO:0000315"/>
    <property type="project" value="MGI"/>
</dbReference>
<dbReference type="GO" id="GO:0099504">
    <property type="term" value="P:synaptic vesicle cycle"/>
    <property type="evidence" value="ECO:0000314"/>
    <property type="project" value="SynGO"/>
</dbReference>
<dbReference type="GO" id="GO:0097050">
    <property type="term" value="P:type B pancreatic cell apoptotic process"/>
    <property type="evidence" value="ECO:0000315"/>
    <property type="project" value="MGI"/>
</dbReference>
<dbReference type="CDD" id="cd01486">
    <property type="entry name" value="Apg7"/>
    <property type="match status" value="1"/>
</dbReference>
<dbReference type="FunFam" id="3.40.140.100:FF:000001">
    <property type="entry name" value="Ubiquitin-like modifier-activating enzyme ATG7"/>
    <property type="match status" value="1"/>
</dbReference>
<dbReference type="FunFam" id="3.40.50.720:FF:000156">
    <property type="entry name" value="Ubiquitin-like modifier-activating enzyme ATG7"/>
    <property type="match status" value="1"/>
</dbReference>
<dbReference type="FunFam" id="3.40.140.70:FF:000001">
    <property type="entry name" value="Ubiquitin-like modifier-activating enzyme atg7"/>
    <property type="match status" value="1"/>
</dbReference>
<dbReference type="Gene3D" id="3.40.50.720">
    <property type="entry name" value="NAD(P)-binding Rossmann-like Domain"/>
    <property type="match status" value="1"/>
</dbReference>
<dbReference type="Gene3D" id="3.40.140.100">
    <property type="entry name" value="Ubiquitin-like modifier-activating enzyme ATG7 C-terminal domain"/>
    <property type="match status" value="1"/>
</dbReference>
<dbReference type="Gene3D" id="3.40.140.70">
    <property type="entry name" value="Ubiquitin-like modifier-activating enzyme ATG7 N-terminal domain"/>
    <property type="match status" value="1"/>
</dbReference>
<dbReference type="InterPro" id="IPR006285">
    <property type="entry name" value="Atg7"/>
</dbReference>
<dbReference type="InterPro" id="IPR032197">
    <property type="entry name" value="Atg7_N"/>
</dbReference>
<dbReference type="InterPro" id="IPR042522">
    <property type="entry name" value="Atg7_N_1"/>
</dbReference>
<dbReference type="InterPro" id="IPR042523">
    <property type="entry name" value="Atg7_N_2"/>
</dbReference>
<dbReference type="InterPro" id="IPR045886">
    <property type="entry name" value="ThiF/MoeB/HesA"/>
</dbReference>
<dbReference type="InterPro" id="IPR000594">
    <property type="entry name" value="ThiF_NAD_FAD-bd"/>
</dbReference>
<dbReference type="InterPro" id="IPR035985">
    <property type="entry name" value="Ubiquitin-activating_enz"/>
</dbReference>
<dbReference type="NCBIfam" id="TIGR01381">
    <property type="entry name" value="E1_like_apg7"/>
    <property type="match status" value="1"/>
</dbReference>
<dbReference type="PANTHER" id="PTHR10953">
    <property type="entry name" value="UBIQUITIN-ACTIVATING ENZYME E1"/>
    <property type="match status" value="1"/>
</dbReference>
<dbReference type="PANTHER" id="PTHR10953:SF3">
    <property type="entry name" value="UBIQUITIN-LIKE MODIFIER-ACTIVATING ENZYME ATG7"/>
    <property type="match status" value="1"/>
</dbReference>
<dbReference type="Pfam" id="PF16420">
    <property type="entry name" value="ATG7_N"/>
    <property type="match status" value="1"/>
</dbReference>
<dbReference type="Pfam" id="PF00899">
    <property type="entry name" value="ThiF"/>
    <property type="match status" value="1"/>
</dbReference>
<dbReference type="SUPFAM" id="SSF69572">
    <property type="entry name" value="Activating enzymes of the ubiquitin-like proteins"/>
    <property type="match status" value="1"/>
</dbReference>
<reference key="1">
    <citation type="journal article" date="2002" name="Biochem. Biophys. Res. Commun.">
        <title>Murine Apg12p has a substrate preference for murine Apg7p over three Apg8p homologs.</title>
        <authorList>
            <person name="Tanida I."/>
            <person name="Tanida-Miyake E."/>
            <person name="Nishitani T."/>
            <person name="Komatsu M."/>
            <person name="Yamazaki H."/>
            <person name="Ueno T."/>
            <person name="Kominami E."/>
        </authorList>
    </citation>
    <scope>NUCLEOTIDE SEQUENCE [MRNA]</scope>
    <scope>FUNCTION IN GABARAPL1-ATG7 INTERMEDIATE CONJUGATE FORMATION</scope>
    <scope>TISSUE SPECIFICITY</scope>
    <scope>INTERACTION WITH ATG12</scope>
    <scope>MUTAGENESIS OF CYS-567</scope>
    <source>
        <tissue>Brain</tissue>
    </source>
</reference>
<reference key="2">
    <citation type="journal article" date="2005" name="Science">
        <title>The transcriptional landscape of the mammalian genome.</title>
        <authorList>
            <person name="Carninci P."/>
            <person name="Kasukawa T."/>
            <person name="Katayama S."/>
            <person name="Gough J."/>
            <person name="Frith M.C."/>
            <person name="Maeda N."/>
            <person name="Oyama R."/>
            <person name="Ravasi T."/>
            <person name="Lenhard B."/>
            <person name="Wells C."/>
            <person name="Kodzius R."/>
            <person name="Shimokawa K."/>
            <person name="Bajic V.B."/>
            <person name="Brenner S.E."/>
            <person name="Batalov S."/>
            <person name="Forrest A.R."/>
            <person name="Zavolan M."/>
            <person name="Davis M.J."/>
            <person name="Wilming L.G."/>
            <person name="Aidinis V."/>
            <person name="Allen J.E."/>
            <person name="Ambesi-Impiombato A."/>
            <person name="Apweiler R."/>
            <person name="Aturaliya R.N."/>
            <person name="Bailey T.L."/>
            <person name="Bansal M."/>
            <person name="Baxter L."/>
            <person name="Beisel K.W."/>
            <person name="Bersano T."/>
            <person name="Bono H."/>
            <person name="Chalk A.M."/>
            <person name="Chiu K.P."/>
            <person name="Choudhary V."/>
            <person name="Christoffels A."/>
            <person name="Clutterbuck D.R."/>
            <person name="Crowe M.L."/>
            <person name="Dalla E."/>
            <person name="Dalrymple B.P."/>
            <person name="de Bono B."/>
            <person name="Della Gatta G."/>
            <person name="di Bernardo D."/>
            <person name="Down T."/>
            <person name="Engstrom P."/>
            <person name="Fagiolini M."/>
            <person name="Faulkner G."/>
            <person name="Fletcher C.F."/>
            <person name="Fukushima T."/>
            <person name="Furuno M."/>
            <person name="Futaki S."/>
            <person name="Gariboldi M."/>
            <person name="Georgii-Hemming P."/>
            <person name="Gingeras T.R."/>
            <person name="Gojobori T."/>
            <person name="Green R.E."/>
            <person name="Gustincich S."/>
            <person name="Harbers M."/>
            <person name="Hayashi Y."/>
            <person name="Hensch T.K."/>
            <person name="Hirokawa N."/>
            <person name="Hill D."/>
            <person name="Huminiecki L."/>
            <person name="Iacono M."/>
            <person name="Ikeo K."/>
            <person name="Iwama A."/>
            <person name="Ishikawa T."/>
            <person name="Jakt M."/>
            <person name="Kanapin A."/>
            <person name="Katoh M."/>
            <person name="Kawasawa Y."/>
            <person name="Kelso J."/>
            <person name="Kitamura H."/>
            <person name="Kitano H."/>
            <person name="Kollias G."/>
            <person name="Krishnan S.P."/>
            <person name="Kruger A."/>
            <person name="Kummerfeld S.K."/>
            <person name="Kurochkin I.V."/>
            <person name="Lareau L.F."/>
            <person name="Lazarevic D."/>
            <person name="Lipovich L."/>
            <person name="Liu J."/>
            <person name="Liuni S."/>
            <person name="McWilliam S."/>
            <person name="Madan Babu M."/>
            <person name="Madera M."/>
            <person name="Marchionni L."/>
            <person name="Matsuda H."/>
            <person name="Matsuzawa S."/>
            <person name="Miki H."/>
            <person name="Mignone F."/>
            <person name="Miyake S."/>
            <person name="Morris K."/>
            <person name="Mottagui-Tabar S."/>
            <person name="Mulder N."/>
            <person name="Nakano N."/>
            <person name="Nakauchi H."/>
            <person name="Ng P."/>
            <person name="Nilsson R."/>
            <person name="Nishiguchi S."/>
            <person name="Nishikawa S."/>
            <person name="Nori F."/>
            <person name="Ohara O."/>
            <person name="Okazaki Y."/>
            <person name="Orlando V."/>
            <person name="Pang K.C."/>
            <person name="Pavan W.J."/>
            <person name="Pavesi G."/>
            <person name="Pesole G."/>
            <person name="Petrovsky N."/>
            <person name="Piazza S."/>
            <person name="Reed J."/>
            <person name="Reid J.F."/>
            <person name="Ring B.Z."/>
            <person name="Ringwald M."/>
            <person name="Rost B."/>
            <person name="Ruan Y."/>
            <person name="Salzberg S.L."/>
            <person name="Sandelin A."/>
            <person name="Schneider C."/>
            <person name="Schoenbach C."/>
            <person name="Sekiguchi K."/>
            <person name="Semple C.A."/>
            <person name="Seno S."/>
            <person name="Sessa L."/>
            <person name="Sheng Y."/>
            <person name="Shibata Y."/>
            <person name="Shimada H."/>
            <person name="Shimada K."/>
            <person name="Silva D."/>
            <person name="Sinclair B."/>
            <person name="Sperling S."/>
            <person name="Stupka E."/>
            <person name="Sugiura K."/>
            <person name="Sultana R."/>
            <person name="Takenaka Y."/>
            <person name="Taki K."/>
            <person name="Tammoja K."/>
            <person name="Tan S.L."/>
            <person name="Tang S."/>
            <person name="Taylor M.S."/>
            <person name="Tegner J."/>
            <person name="Teichmann S.A."/>
            <person name="Ueda H.R."/>
            <person name="van Nimwegen E."/>
            <person name="Verardo R."/>
            <person name="Wei C.L."/>
            <person name="Yagi K."/>
            <person name="Yamanishi H."/>
            <person name="Zabarovsky E."/>
            <person name="Zhu S."/>
            <person name="Zimmer A."/>
            <person name="Hide W."/>
            <person name="Bult C."/>
            <person name="Grimmond S.M."/>
            <person name="Teasdale R.D."/>
            <person name="Liu E.T."/>
            <person name="Brusic V."/>
            <person name="Quackenbush J."/>
            <person name="Wahlestedt C."/>
            <person name="Mattick J.S."/>
            <person name="Hume D.A."/>
            <person name="Kai C."/>
            <person name="Sasaki D."/>
            <person name="Tomaru Y."/>
            <person name="Fukuda S."/>
            <person name="Kanamori-Katayama M."/>
            <person name="Suzuki M."/>
            <person name="Aoki J."/>
            <person name="Arakawa T."/>
            <person name="Iida J."/>
            <person name="Imamura K."/>
            <person name="Itoh M."/>
            <person name="Kato T."/>
            <person name="Kawaji H."/>
            <person name="Kawagashira N."/>
            <person name="Kawashima T."/>
            <person name="Kojima M."/>
            <person name="Kondo S."/>
            <person name="Konno H."/>
            <person name="Nakano K."/>
            <person name="Ninomiya N."/>
            <person name="Nishio T."/>
            <person name="Okada M."/>
            <person name="Plessy C."/>
            <person name="Shibata K."/>
            <person name="Shiraki T."/>
            <person name="Suzuki S."/>
            <person name="Tagami M."/>
            <person name="Waki K."/>
            <person name="Watahiki A."/>
            <person name="Okamura-Oho Y."/>
            <person name="Suzuki H."/>
            <person name="Kawai J."/>
            <person name="Hayashizaki Y."/>
        </authorList>
    </citation>
    <scope>NUCLEOTIDE SEQUENCE [LARGE SCALE MRNA]</scope>
    <source>
        <strain>C57BL/6J</strain>
        <strain>NOD</strain>
        <tissue>Pancreas</tissue>
        <tissue>Spleen</tissue>
        <tissue>Urinary bladder</tissue>
    </source>
</reference>
<reference key="3">
    <citation type="journal article" date="2004" name="Genome Res.">
        <title>The status, quality, and expansion of the NIH full-length cDNA project: the Mammalian Gene Collection (MGC).</title>
        <authorList>
            <consortium name="The MGC Project Team"/>
        </authorList>
    </citation>
    <scope>NUCLEOTIDE SEQUENCE [LARGE SCALE MRNA]</scope>
    <source>
        <tissue>Eye</tissue>
    </source>
</reference>
<reference key="4">
    <citation type="journal article" date="2002" name="FEBS Lett.">
        <title>Mouse Apg10 as an Apg12-conjugating enzyme: analysis by the conjugation-mediated yeast two-hybrid method.</title>
        <authorList>
            <person name="Mizushima N."/>
            <person name="Yoshimori T."/>
            <person name="Ohsumi Y."/>
        </authorList>
    </citation>
    <scope>INTERACTION WITH ATG10 AND ATG12</scope>
</reference>
<reference key="5">
    <citation type="journal article" date="2004" name="Science">
        <title>Regulation of an ATG7-beclin 1 program of autophagic cell death by caspase-8.</title>
        <authorList>
            <person name="Yu L."/>
            <person name="Alva A."/>
            <person name="Su H."/>
            <person name="Dutt P."/>
            <person name="Freundt E."/>
            <person name="Welsh S."/>
            <person name="Baehrecke E.H."/>
            <person name="Lenardo M.J."/>
        </authorList>
    </citation>
    <scope>FUNCTION</scope>
</reference>
<reference key="6">
    <citation type="journal article" date="2005" name="J. Cell Biol.">
        <title>Impairment of starvation-induced and constitutive autophagy in Atg7-deficient mice.</title>
        <authorList>
            <person name="Komatsu M."/>
            <person name="Waguri S."/>
            <person name="Ueno T."/>
            <person name="Iwata J."/>
            <person name="Murata S."/>
            <person name="Tanida I."/>
            <person name="Ezaki J."/>
            <person name="Mizushima N."/>
            <person name="Ohsumi Y."/>
            <person name="Uchiyama Y."/>
            <person name="Kominami E."/>
            <person name="Tanaka K."/>
            <person name="Chiba T."/>
        </authorList>
    </citation>
    <scope>FUNCTION</scope>
    <scope>DISRUPTION PHENOTYPE</scope>
</reference>
<reference key="7">
    <citation type="journal article" date="2006" name="FEBS J.">
        <title>Atg8L/Apg8L is the fourth mammalian modifier of mammalian Atg8 conjugation mediated by human Atg4B, Atg7 and Atg3.</title>
        <authorList>
            <person name="Tanida I."/>
            <person name="Sou Y.S."/>
            <person name="Minematsu-Ikeguchi N."/>
            <person name="Ueno T."/>
            <person name="Kominami E."/>
        </authorList>
    </citation>
    <scope>FUNCTION</scope>
    <scope>INTERACTION WITH GABARAPL1</scope>
</reference>
<reference key="8">
    <citation type="journal article" date="2007" name="Proc. Natl. Acad. Sci. U.S.A.">
        <title>Essential role for autophagy protein Atg7 in the maintenance of axonal homeostasis and the prevention of axonal degeneration.</title>
        <authorList>
            <person name="Komatsu M."/>
            <person name="Wang Q.J."/>
            <person name="Holstein G.R."/>
            <person name="Friedrich V.L. Jr."/>
            <person name="Iwata J."/>
            <person name="Kominami E."/>
            <person name="Chait B.T."/>
            <person name="Tanaka K."/>
            <person name="Yue Z."/>
        </authorList>
    </citation>
    <scope>FUNCTION</scope>
</reference>
<reference key="9">
    <citation type="journal article" date="2009" name="Blood">
        <title>Mitochondrial clearance is regulated by Atg7-dependent and -independent mechanisms during reticulocyte maturation.</title>
        <authorList>
            <person name="Zhang J."/>
            <person name="Randall M.S."/>
            <person name="Loyd M.R."/>
            <person name="Dorsey F.C."/>
            <person name="Kundu M."/>
            <person name="Cleveland J.L."/>
            <person name="Ney P.A."/>
        </authorList>
    </citation>
    <scope>FUNCTION</scope>
</reference>
<reference key="10">
    <citation type="journal article" date="2010" name="Cell">
        <title>A tissue-specific atlas of mouse protein phosphorylation and expression.</title>
        <authorList>
            <person name="Huttlin E.L."/>
            <person name="Jedrychowski M.P."/>
            <person name="Elias J.E."/>
            <person name="Goswami T."/>
            <person name="Rad R."/>
            <person name="Beausoleil S.A."/>
            <person name="Villen J."/>
            <person name="Haas W."/>
            <person name="Sowa M.E."/>
            <person name="Gygi S.P."/>
        </authorList>
    </citation>
    <scope>IDENTIFICATION BY MASS SPECTROMETRY [LARGE SCALE ANALYSIS]</scope>
    <source>
        <tissue>Brain</tissue>
        <tissue>Brown adipose tissue</tissue>
        <tissue>Heart</tissue>
        <tissue>Kidney</tissue>
        <tissue>Liver</tissue>
        <tissue>Lung</tissue>
        <tissue>Pancreas</tissue>
        <tissue>Spleen</tissue>
        <tissue>Testis</tissue>
    </source>
</reference>
<reference key="11">
    <citation type="journal article" date="2013" name="Nature">
        <title>Functional interaction between autophagy and ciliogenesis.</title>
        <authorList>
            <person name="Pampliega O."/>
            <person name="Orhon I."/>
            <person name="Patel B."/>
            <person name="Sridhar S."/>
            <person name="Diaz-Carretero A."/>
            <person name="Beau I."/>
            <person name="Codogno P."/>
            <person name="Satir B.H."/>
            <person name="Satir P."/>
            <person name="Cuervo A.M."/>
        </authorList>
    </citation>
    <scope>SUBCELLULAR LOCATION</scope>
</reference>
<reference key="12">
    <citation type="journal article" date="2009" name="J. Clin. Invest.">
        <title>Autophagy regulates adipose mass and differentiation in mice.</title>
        <authorList>
            <person name="Singh R."/>
            <person name="Xiang Y."/>
            <person name="Wang Y."/>
            <person name="Baikati K."/>
            <person name="Cuervo A.M."/>
            <person name="Luu Y.K."/>
            <person name="Tang Y."/>
            <person name="Pessin J.E."/>
            <person name="Schwartz G.J."/>
            <person name="Czaja M.J."/>
        </authorList>
    </citation>
    <scope>FUNCTION</scope>
</reference>
<reference key="13">
    <citation type="journal article" date="2009" name="Proc. Natl. Acad. Sci. U.S.A.">
        <title>Adipose-specific deletion of autophagy-related gene 7 (atg7) in mice reveals a role in adipogenesis.</title>
        <authorList>
            <person name="Zhang Y."/>
            <person name="Goldman S."/>
            <person name="Baerga R."/>
            <person name="Zhao Y."/>
            <person name="Komatsu M."/>
            <person name="Jin S."/>
        </authorList>
    </citation>
    <scope>FUNCTION</scope>
</reference>
<reference key="14">
    <citation type="journal article" date="2010" name="Cell">
        <title>ATG12 conjugation to ATG3 regulates mitochondrial homeostasis and cell death.</title>
        <authorList>
            <person name="Radoshevich L."/>
            <person name="Murrow L."/>
            <person name="Chen N."/>
            <person name="Fernandez E."/>
            <person name="Roy S."/>
            <person name="Fung C."/>
            <person name="Debnath J."/>
        </authorList>
    </citation>
    <scope>FUNCTION</scope>
</reference>
<reference key="15">
    <citation type="journal article" date="2011" name="Circ. Res.">
        <title>Atg7 induces basal autophagy and rescues autophagic deficiency in CryABR120G cardiomyocytes.</title>
        <authorList>
            <person name="Pattison J.S."/>
            <person name="Osinska H."/>
            <person name="Robbins J."/>
        </authorList>
    </citation>
    <scope>FUNCTION</scope>
</reference>
<reference key="16">
    <citation type="journal article" date="2011" name="J. Exp. Med.">
        <title>The autophagy protein Atg7 is essential for hematopoietic stem cell maintenance.</title>
        <authorList>
            <person name="Mortensen M."/>
            <person name="Soilleux E.J."/>
            <person name="Djordjevic G."/>
            <person name="Tripp R."/>
            <person name="Lutteropp M."/>
            <person name="Sadighi-Akha E."/>
            <person name="Stranks A.J."/>
            <person name="Glanville J."/>
            <person name="Knight S."/>
            <person name="Jacobsen S.E."/>
            <person name="Kranc K.R."/>
            <person name="Simon A.K."/>
        </authorList>
    </citation>
    <scope>FUNCTION</scope>
</reference>
<reference key="17">
    <citation type="journal article" date="2012" name="Clin. Dev. Immunol.">
        <title>Lack of intestinal epithelial atg7 affects paneth cell granule formation but does not compromise immune homeostasis in the gut.</title>
        <authorList>
            <person name="Wittkopf N."/>
            <person name="Gunther C."/>
            <person name="Martini E."/>
            <person name="Waldner M."/>
            <person name="Amann K.U."/>
            <person name="Neurath M.F."/>
            <person name="Becker C."/>
        </authorList>
    </citation>
    <scope>FUNCTION</scope>
</reference>
<reference key="18">
    <citation type="journal article" date="2012" name="Science">
        <title>Atg7 modulates p53 activity to regulate cell cycle and survival during metabolic stress.</title>
        <authorList>
            <person name="Lee I.H."/>
            <person name="Kawai Y."/>
            <person name="Fergusson M.M."/>
            <person name="Rovira I.I."/>
            <person name="Bishop A.J."/>
            <person name="Motoyama N."/>
            <person name="Cao L."/>
            <person name="Finkel T."/>
        </authorList>
    </citation>
    <scope>FUNCTION</scope>
</reference>
<reference key="19">
    <citation type="journal article" date="2018" name="Cell Metab.">
        <title>Autophagy regulates the liver clock and glucose metabolism by degrading CRY1.</title>
        <authorList>
            <person name="Toledo M."/>
            <person name="Batista-Gonzalez A."/>
            <person name="Merheb E."/>
            <person name="Aoun M.L."/>
            <person name="Tarabra E."/>
            <person name="Feng D."/>
            <person name="Sarparanta J."/>
            <person name="Merlo P."/>
            <person name="Botre F."/>
            <person name="Schwartz G.J."/>
            <person name="Pessin J.E."/>
            <person name="Singh R."/>
        </authorList>
    </citation>
    <scope>FUNCTION</scope>
    <scope>DISRUPTION PHENOTYPE</scope>
</reference>
<comment type="function">
    <text evidence="2 3 5 6 7 8 9 10 11 12 13 14 15 16 18">E1-like activating enzyme involved in the 2 ubiquitin-like systems required for cytoplasm to vacuole transport (Cvt) and autophagy. Activates ATG12 for its conjugation with ATG5 as well as the ATG8 family proteins for their conjugation with phosphatidylethanolamine. Both systems are needed for the ATG8 association to Cvt vesicles and autophagosomes membranes. Facilitates LC3-I lipidation with phosphatidylethanolamine to form LC3-II which is found on autophagosomal membranes (By similarity). Required for autophagic death induced by caspase-8 inhibition. Required for mitophagy which contributes to regulate mitochondrial quantity and quality by eliminating the mitochondria to a basal level to fulfill cellular energy requirements and preventing excess ROS production. Modulates p53/TP53 activity to regulate cell cycle and survival during metabolic stress. Also plays a key role in the maintenance of axonal homeostasis, the prevention of axonal degeneration, the maintenance of hematopoietic stem cells, the formation of Paneth cell granules, as well as in adipose differentiation. Plays a role in regulating the liver clock and glucose metabolism by mediating the autophagic degradation of CRY1 (clock repressor) in a time-dependent manner (PubMed:29937374).</text>
</comment>
<comment type="subunit">
    <text evidence="2 3 4 7">Homodimer. Interacts with ATG3; this interaction is essential for the transfer of ATG8-like proteins's thioester from ATG7 to ATG3 and plays a role in the conjugation of ATG12 to ATG5 (By similarity). Interacts with ATG12 (PubMed:11890701, PubMed:12482611). Interacts with ATG10 (PubMed:12482611). Forms intermediate conjugates with GABARAPL1 (PubMed:16704426). Forms intermediate conjugates with ATG8-like proteins such as GABARAP, GABARAPL2 or MAP1LC3A (By similarity). Interacts with EP300 acetyltransferase. Interacts with FOXO1 (By similarity).</text>
</comment>
<comment type="subcellular location">
    <subcellularLocation>
        <location evidence="1">Cytoplasm</location>
    </subcellularLocation>
    <subcellularLocation>
        <location evidence="1">Preautophagosomal structure</location>
    </subcellularLocation>
    <text evidence="17">Also localizes to discrete punctae along the ciliary axoneme and to the base of the ciliary axoneme.</text>
</comment>
<comment type="tissue specificity">
    <text evidence="3">Widely expressed, especially in kidney, liver, lymph nodes and bone marrow.</text>
</comment>
<comment type="domain">
    <text evidence="1">The C-terminal part of the protein is essential for the dimerization and interaction with ATG3 and ATG12.</text>
</comment>
<comment type="domain">
    <text evidence="1">The N-terminal FAP motif (residues 11 to 13) is essential for the formation of the ATG89-PE and ATG5-ATG12 conjugates.</text>
</comment>
<comment type="PTM">
    <text evidence="1">Acetylated by EP300.</text>
</comment>
<comment type="PTM">
    <text evidence="2">Polyubiquitinated on Lys-41 via 'Lys-63'-linked ubiquitin by TRIM32; this modification positiely regulates ATG8 and ATG12 activating enzyme activity leading to initiation of autophagy under metabolic stress.</text>
</comment>
<comment type="disruption phenotype">
    <text evidence="6 18">Leads to hepatomegaly in liver and accumulation of abnormal organelles in hepatic cells (PubMed:15866887). Liver-specific knockout leads to loss of autophagy, increased accumulation of CRY1, decreased blood glucose levels due to impaired gluconeogenesis and the disruption of the circadian clock in the liver (PubMed:29937374).</text>
</comment>
<comment type="similarity">
    <text evidence="19">Belongs to the ATG7 family.</text>
</comment>